<sequence length="376" mass="42463">MQKTAIIAEYNPFHNGHYYQAQTARHETGADVMIAIMSAQFTQRGEPASFDKWKRAKAAVESGAIDLVIELPTQYGVQRADRFASASVSIAEQLRCQTLSFGSESGDIDAILHAARSHVEETPRYKEALKKALQEGHSSAQASSRAFRTVYPSFDLTRPNNILGYHYAKAAKSIQLHTVKRLGADYHDPSLMDVMSATGIRAHYLDIGEVRAVPASTEAMFRTRPMTHWEHYWPVLQFKLRTLPLHTMMELVGIDASLAPRLKQAGVEPSFERALAAVSTRRYTRTAIQRAFVAVLLHWLKDEAPTRFDEVPYVRPLAFNDLGRLALRDVKDDVPLVSKFDARLDFEARVTEAYRLPLQDDALIEHRQRPQFISSK</sequence>
<accession>C4L5T3</accession>
<feature type="chain" id="PRO_1000215425" description="tRNA(Met) cytidine acetate ligase">
    <location>
        <begin position="1"/>
        <end position="376"/>
    </location>
</feature>
<feature type="binding site" evidence="1">
    <location>
        <begin position="7"/>
        <end position="20"/>
    </location>
    <ligand>
        <name>ATP</name>
        <dbReference type="ChEBI" id="CHEBI:30616"/>
    </ligand>
</feature>
<feature type="binding site" evidence="1">
    <location>
        <position position="102"/>
    </location>
    <ligand>
        <name>ATP</name>
        <dbReference type="ChEBI" id="CHEBI:30616"/>
    </ligand>
</feature>
<feature type="binding site" evidence="1">
    <location>
        <position position="160"/>
    </location>
    <ligand>
        <name>ATP</name>
        <dbReference type="ChEBI" id="CHEBI:30616"/>
    </ligand>
</feature>
<feature type="binding site" evidence="1">
    <location>
        <position position="181"/>
    </location>
    <ligand>
        <name>ATP</name>
        <dbReference type="ChEBI" id="CHEBI:30616"/>
    </ligand>
</feature>
<evidence type="ECO:0000255" key="1">
    <source>
        <dbReference type="HAMAP-Rule" id="MF_01539"/>
    </source>
</evidence>
<reference key="1">
    <citation type="journal article" date="2011" name="J. Bacteriol.">
        <title>Complete genome sequence of the Thermophilic Bacterium Exiguobacterium sp. AT1b.</title>
        <authorList>
            <person name="Vishnivetskaya T.A."/>
            <person name="Lucas S."/>
            <person name="Copeland A."/>
            <person name="Lapidus A."/>
            <person name="Glavina del Rio T."/>
            <person name="Dalin E."/>
            <person name="Tice H."/>
            <person name="Bruce D.C."/>
            <person name="Goodwin L.A."/>
            <person name="Pitluck S."/>
            <person name="Saunders E."/>
            <person name="Brettin T."/>
            <person name="Detter C."/>
            <person name="Han C."/>
            <person name="Larimer F."/>
            <person name="Land M.L."/>
            <person name="Hauser L.J."/>
            <person name="Kyrpides N.C."/>
            <person name="Ovchinnikova G."/>
            <person name="Kathariou S."/>
            <person name="Ramaley R.F."/>
            <person name="Rodrigues D.F."/>
            <person name="Hendrix C."/>
            <person name="Richardson P."/>
            <person name="Tiedje J.M."/>
        </authorList>
    </citation>
    <scope>NUCLEOTIDE SEQUENCE [LARGE SCALE GENOMIC DNA]</scope>
    <source>
        <strain>ATCC BAA-1283 / AT1b</strain>
    </source>
</reference>
<proteinExistence type="inferred from homology"/>
<gene>
    <name evidence="1" type="primary">tmcAL</name>
    <name type="ordered locus">EAT1b_2825</name>
</gene>
<organism>
    <name type="scientific">Exiguobacterium sp. (strain ATCC BAA-1283 / AT1b)</name>
    <dbReference type="NCBI Taxonomy" id="360911"/>
    <lineage>
        <taxon>Bacteria</taxon>
        <taxon>Bacillati</taxon>
        <taxon>Bacillota</taxon>
        <taxon>Bacilli</taxon>
        <taxon>Bacillales</taxon>
        <taxon>Bacillales Family XII. Incertae Sedis</taxon>
        <taxon>Exiguobacterium</taxon>
    </lineage>
</organism>
<keyword id="KW-0067">ATP-binding</keyword>
<keyword id="KW-0963">Cytoplasm</keyword>
<keyword id="KW-0436">Ligase</keyword>
<keyword id="KW-0547">Nucleotide-binding</keyword>
<keyword id="KW-0694">RNA-binding</keyword>
<keyword id="KW-0819">tRNA processing</keyword>
<keyword id="KW-0820">tRNA-binding</keyword>
<protein>
    <recommendedName>
        <fullName evidence="1">tRNA(Met) cytidine acetate ligase</fullName>
        <ecNumber evidence="1">6.3.4.-</ecNumber>
    </recommendedName>
</protein>
<name>TMCAL_EXISA</name>
<comment type="function">
    <text evidence="1">Catalyzes the formation of N(4)-acetylcytidine (ac(4)C) at the wobble position of elongator tRNA(Met), using acetate and ATP as substrates. First activates an acetate ion to form acetyladenylate (Ac-AMP) and then transfers the acetyl group to tRNA to form ac(4)C34.</text>
</comment>
<comment type="catalytic activity">
    <reaction evidence="1">
        <text>cytidine(34) in elongator tRNA(Met) + acetate + ATP = N(4)-acetylcytidine(34) in elongator tRNA(Met) + AMP + diphosphate</text>
        <dbReference type="Rhea" id="RHEA:58144"/>
        <dbReference type="Rhea" id="RHEA-COMP:10693"/>
        <dbReference type="Rhea" id="RHEA-COMP:10694"/>
        <dbReference type="ChEBI" id="CHEBI:30089"/>
        <dbReference type="ChEBI" id="CHEBI:30616"/>
        <dbReference type="ChEBI" id="CHEBI:33019"/>
        <dbReference type="ChEBI" id="CHEBI:74900"/>
        <dbReference type="ChEBI" id="CHEBI:82748"/>
        <dbReference type="ChEBI" id="CHEBI:456215"/>
    </reaction>
</comment>
<comment type="subcellular location">
    <subcellularLocation>
        <location evidence="1">Cytoplasm</location>
    </subcellularLocation>
</comment>
<comment type="similarity">
    <text evidence="1">Belongs to the TmcAL family.</text>
</comment>
<dbReference type="EC" id="6.3.4.-" evidence="1"/>
<dbReference type="EMBL" id="CP001615">
    <property type="protein sequence ID" value="ACQ71739.1"/>
    <property type="molecule type" value="Genomic_DNA"/>
</dbReference>
<dbReference type="RefSeq" id="WP_015881298.1">
    <property type="nucleotide sequence ID" value="NC_012673.1"/>
</dbReference>
<dbReference type="SMR" id="C4L5T3"/>
<dbReference type="STRING" id="360911.EAT1b_2825"/>
<dbReference type="KEGG" id="eat:EAT1b_2825"/>
<dbReference type="eggNOG" id="COG1323">
    <property type="taxonomic scope" value="Bacteria"/>
</dbReference>
<dbReference type="HOGENOM" id="CLU_038915_0_2_9"/>
<dbReference type="OrthoDB" id="9769796at2"/>
<dbReference type="Proteomes" id="UP000000716">
    <property type="component" value="Chromosome"/>
</dbReference>
<dbReference type="GO" id="GO:0005737">
    <property type="term" value="C:cytoplasm"/>
    <property type="evidence" value="ECO:0007669"/>
    <property type="project" value="UniProtKB-SubCell"/>
</dbReference>
<dbReference type="GO" id="GO:0005524">
    <property type="term" value="F:ATP binding"/>
    <property type="evidence" value="ECO:0007669"/>
    <property type="project" value="UniProtKB-KW"/>
</dbReference>
<dbReference type="GO" id="GO:0016879">
    <property type="term" value="F:ligase activity, forming carbon-nitrogen bonds"/>
    <property type="evidence" value="ECO:0007669"/>
    <property type="project" value="UniProtKB-UniRule"/>
</dbReference>
<dbReference type="GO" id="GO:0000049">
    <property type="term" value="F:tRNA binding"/>
    <property type="evidence" value="ECO:0007669"/>
    <property type="project" value="UniProtKB-KW"/>
</dbReference>
<dbReference type="GO" id="GO:0006400">
    <property type="term" value="P:tRNA modification"/>
    <property type="evidence" value="ECO:0007669"/>
    <property type="project" value="UniProtKB-UniRule"/>
</dbReference>
<dbReference type="Gene3D" id="3.40.50.620">
    <property type="entry name" value="HUPs"/>
    <property type="match status" value="1"/>
</dbReference>
<dbReference type="HAMAP" id="MF_01539">
    <property type="entry name" value="TmcAL"/>
    <property type="match status" value="1"/>
</dbReference>
<dbReference type="InterPro" id="IPR014729">
    <property type="entry name" value="Rossmann-like_a/b/a_fold"/>
</dbReference>
<dbReference type="InterPro" id="IPR008513">
    <property type="entry name" value="tRNA(Met)_cyd_acetate_ligase"/>
</dbReference>
<dbReference type="PANTHER" id="PTHR37825">
    <property type="entry name" value="TRNA(MET) CYTIDINE ACETATE LIGASE"/>
    <property type="match status" value="1"/>
</dbReference>
<dbReference type="PANTHER" id="PTHR37825:SF1">
    <property type="entry name" value="TRNA(MET) CYTIDINE ACETATE LIGASE"/>
    <property type="match status" value="1"/>
</dbReference>
<dbReference type="Pfam" id="PF05636">
    <property type="entry name" value="HIGH_NTase1"/>
    <property type="match status" value="1"/>
</dbReference>
<dbReference type="SUPFAM" id="SSF52374">
    <property type="entry name" value="Nucleotidylyl transferase"/>
    <property type="match status" value="1"/>
</dbReference>